<protein>
    <recommendedName>
        <fullName>Probable cytochrome P450 513A1</fullName>
        <ecNumber>1.14.-.-</ecNumber>
    </recommendedName>
</protein>
<reference key="1">
    <citation type="journal article" date="2005" name="Nature">
        <title>The genome of the social amoeba Dictyostelium discoideum.</title>
        <authorList>
            <person name="Eichinger L."/>
            <person name="Pachebat J.A."/>
            <person name="Gloeckner G."/>
            <person name="Rajandream M.A."/>
            <person name="Sucgang R."/>
            <person name="Berriman M."/>
            <person name="Song J."/>
            <person name="Olsen R."/>
            <person name="Szafranski K."/>
            <person name="Xu Q."/>
            <person name="Tunggal B."/>
            <person name="Kummerfeld S."/>
            <person name="Madera M."/>
            <person name="Konfortov B.A."/>
            <person name="Rivero F."/>
            <person name="Bankier A.T."/>
            <person name="Lehmann R."/>
            <person name="Hamlin N."/>
            <person name="Davies R."/>
            <person name="Gaudet P."/>
            <person name="Fey P."/>
            <person name="Pilcher K."/>
            <person name="Chen G."/>
            <person name="Saunders D."/>
            <person name="Sodergren E.J."/>
            <person name="Davis P."/>
            <person name="Kerhornou A."/>
            <person name="Nie X."/>
            <person name="Hall N."/>
            <person name="Anjard C."/>
            <person name="Hemphill L."/>
            <person name="Bason N."/>
            <person name="Farbrother P."/>
            <person name="Desany B."/>
            <person name="Just E."/>
            <person name="Morio T."/>
            <person name="Rost R."/>
            <person name="Churcher C.M."/>
            <person name="Cooper J."/>
            <person name="Haydock S."/>
            <person name="van Driessche N."/>
            <person name="Cronin A."/>
            <person name="Goodhead I."/>
            <person name="Muzny D.M."/>
            <person name="Mourier T."/>
            <person name="Pain A."/>
            <person name="Lu M."/>
            <person name="Harper D."/>
            <person name="Lindsay R."/>
            <person name="Hauser H."/>
            <person name="James K.D."/>
            <person name="Quiles M."/>
            <person name="Madan Babu M."/>
            <person name="Saito T."/>
            <person name="Buchrieser C."/>
            <person name="Wardroper A."/>
            <person name="Felder M."/>
            <person name="Thangavelu M."/>
            <person name="Johnson D."/>
            <person name="Knights A."/>
            <person name="Loulseged H."/>
            <person name="Mungall K.L."/>
            <person name="Oliver K."/>
            <person name="Price C."/>
            <person name="Quail M.A."/>
            <person name="Urushihara H."/>
            <person name="Hernandez J."/>
            <person name="Rabbinowitsch E."/>
            <person name="Steffen D."/>
            <person name="Sanders M."/>
            <person name="Ma J."/>
            <person name="Kohara Y."/>
            <person name="Sharp S."/>
            <person name="Simmonds M.N."/>
            <person name="Spiegler S."/>
            <person name="Tivey A."/>
            <person name="Sugano S."/>
            <person name="White B."/>
            <person name="Walker D."/>
            <person name="Woodward J.R."/>
            <person name="Winckler T."/>
            <person name="Tanaka Y."/>
            <person name="Shaulsky G."/>
            <person name="Schleicher M."/>
            <person name="Weinstock G.M."/>
            <person name="Rosenthal A."/>
            <person name="Cox E.C."/>
            <person name="Chisholm R.L."/>
            <person name="Gibbs R.A."/>
            <person name="Loomis W.F."/>
            <person name="Platzer M."/>
            <person name="Kay R.R."/>
            <person name="Williams J.G."/>
            <person name="Dear P.H."/>
            <person name="Noegel A.A."/>
            <person name="Barrell B.G."/>
            <person name="Kuspa A."/>
        </authorList>
    </citation>
    <scope>NUCLEOTIDE SEQUENCE [LARGE SCALE GENOMIC DNA]</scope>
    <source>
        <strain>AX4</strain>
    </source>
</reference>
<gene>
    <name type="primary">cyp513A1</name>
    <name type="ORF">DDB_G0282183</name>
</gene>
<name>C5131_DICDI</name>
<comment type="cofactor">
    <cofactor evidence="1">
        <name>heme</name>
        <dbReference type="ChEBI" id="CHEBI:30413"/>
    </cofactor>
</comment>
<comment type="subcellular location">
    <subcellularLocation>
        <location evidence="3">Membrane</location>
        <topology evidence="3">Single-pass membrane protein</topology>
    </subcellularLocation>
</comment>
<comment type="similarity">
    <text evidence="3">Belongs to the cytochrome P450 family.</text>
</comment>
<dbReference type="EC" id="1.14.-.-"/>
<dbReference type="EMBL" id="AAFI02000045">
    <property type="protein sequence ID" value="EAS66871.1"/>
    <property type="molecule type" value="Genomic_DNA"/>
</dbReference>
<dbReference type="RefSeq" id="XP_001134554.1">
    <property type="nucleotide sequence ID" value="XM_001134554.1"/>
</dbReference>
<dbReference type="SMR" id="Q1ZXG6"/>
<dbReference type="STRING" id="44689.Q1ZXG6"/>
<dbReference type="PaxDb" id="44689-DDB0232336"/>
<dbReference type="EnsemblProtists" id="EAS66871">
    <property type="protein sequence ID" value="EAS66871"/>
    <property type="gene ID" value="DDB_G0282183"/>
</dbReference>
<dbReference type="GeneID" id="8623430"/>
<dbReference type="KEGG" id="ddi:DDB_G0282183"/>
<dbReference type="dictyBase" id="DDB_G0282183">
    <property type="gene designation" value="cyp513A1"/>
</dbReference>
<dbReference type="VEuPathDB" id="AmoebaDB:DDB_G0282183"/>
<dbReference type="eggNOG" id="KOG0156">
    <property type="taxonomic scope" value="Eukaryota"/>
</dbReference>
<dbReference type="HOGENOM" id="CLU_001570_22_0_1"/>
<dbReference type="InParanoid" id="Q1ZXG6"/>
<dbReference type="OMA" id="WPVDIFP"/>
<dbReference type="PhylomeDB" id="Q1ZXG6"/>
<dbReference type="PRO" id="PR:Q1ZXG6"/>
<dbReference type="Proteomes" id="UP000002195">
    <property type="component" value="Chromosome 3"/>
</dbReference>
<dbReference type="GO" id="GO:0016020">
    <property type="term" value="C:membrane"/>
    <property type="evidence" value="ECO:0007669"/>
    <property type="project" value="UniProtKB-SubCell"/>
</dbReference>
<dbReference type="GO" id="GO:0020037">
    <property type="term" value="F:heme binding"/>
    <property type="evidence" value="ECO:0007669"/>
    <property type="project" value="InterPro"/>
</dbReference>
<dbReference type="GO" id="GO:0005506">
    <property type="term" value="F:iron ion binding"/>
    <property type="evidence" value="ECO:0007669"/>
    <property type="project" value="InterPro"/>
</dbReference>
<dbReference type="GO" id="GO:0004497">
    <property type="term" value="F:monooxygenase activity"/>
    <property type="evidence" value="ECO:0007669"/>
    <property type="project" value="UniProtKB-KW"/>
</dbReference>
<dbReference type="GO" id="GO:0016705">
    <property type="term" value="F:oxidoreductase activity, acting on paired donors, with incorporation or reduction of molecular oxygen"/>
    <property type="evidence" value="ECO:0007669"/>
    <property type="project" value="InterPro"/>
</dbReference>
<dbReference type="CDD" id="cd20617">
    <property type="entry name" value="CYP1_2-like"/>
    <property type="match status" value="1"/>
</dbReference>
<dbReference type="Gene3D" id="1.10.630.10">
    <property type="entry name" value="Cytochrome P450"/>
    <property type="match status" value="1"/>
</dbReference>
<dbReference type="InterPro" id="IPR001128">
    <property type="entry name" value="Cyt_P450"/>
</dbReference>
<dbReference type="InterPro" id="IPR017972">
    <property type="entry name" value="Cyt_P450_CS"/>
</dbReference>
<dbReference type="InterPro" id="IPR002401">
    <property type="entry name" value="Cyt_P450_E_grp-I"/>
</dbReference>
<dbReference type="InterPro" id="IPR036396">
    <property type="entry name" value="Cyt_P450_sf"/>
</dbReference>
<dbReference type="PANTHER" id="PTHR24303:SF11">
    <property type="entry name" value="CYTOCHROME P450 513A1-RELATED"/>
    <property type="match status" value="1"/>
</dbReference>
<dbReference type="PANTHER" id="PTHR24303">
    <property type="entry name" value="HEME-BINDING MONOOXYGENASE FAMILY"/>
    <property type="match status" value="1"/>
</dbReference>
<dbReference type="Pfam" id="PF00067">
    <property type="entry name" value="p450"/>
    <property type="match status" value="1"/>
</dbReference>
<dbReference type="PRINTS" id="PR00463">
    <property type="entry name" value="EP450I"/>
</dbReference>
<dbReference type="PRINTS" id="PR00385">
    <property type="entry name" value="P450"/>
</dbReference>
<dbReference type="SUPFAM" id="SSF48264">
    <property type="entry name" value="Cytochrome P450"/>
    <property type="match status" value="1"/>
</dbReference>
<dbReference type="PROSITE" id="PS00086">
    <property type="entry name" value="CYTOCHROME_P450"/>
    <property type="match status" value="1"/>
</dbReference>
<evidence type="ECO:0000250" key="1"/>
<evidence type="ECO:0000255" key="2"/>
<evidence type="ECO:0000305" key="3"/>
<proteinExistence type="inferred from homology"/>
<sequence length="509" mass="58499">MNYLVGLVLIFTIFYFFLQKNDKNMNSKIPGPKGIPILGNLLSMKGDLHLKLQEWYKQYGVIYRIKMGNVETVVLTEYPIIREAFIGNSNSFVNRFQRKSRLKLNNGENLVIVNGDIHNKLKTLVLSEMTNQRIKKYETSFIDNEIKKLFKVLDEHADTGKPIILNNHIKMFSMNIVLCFTFGLNYSYPYDEFEKASEFIKLMVEFFNIAGQPIISDFIPSLEPFIDTSNYLNTYKRIFNYTSDLITKFKNENEIHNNINDNNKSLADKPILSKLLQSFENGEISWDSVVSTCIDLQTAGADTSANTILYCLLELINNPNIQSKVYDDIKQAIIQSKENENQNDNENQEQTEEIITLSFNKYRTLAPYLSMVVKETFRKYPSGTIGLPHVTSEDVELNGYKICAGTQIIQNIWATHRNEKQFSEPDSFIPERFISQQQSANSNLIHFGCGVRDCIGKSLADSEIFTMLASLINRYEFTNPNPSTPLNEIGKFGITYSCPENKIIIKKRF</sequence>
<keyword id="KW-0349">Heme</keyword>
<keyword id="KW-0408">Iron</keyword>
<keyword id="KW-0472">Membrane</keyword>
<keyword id="KW-0479">Metal-binding</keyword>
<keyword id="KW-0503">Monooxygenase</keyword>
<keyword id="KW-0560">Oxidoreductase</keyword>
<keyword id="KW-1185">Reference proteome</keyword>
<keyword id="KW-0812">Transmembrane</keyword>
<keyword id="KW-1133">Transmembrane helix</keyword>
<accession>Q1ZXG6</accession>
<feature type="chain" id="PRO_0000318813" description="Probable cytochrome P450 513A1">
    <location>
        <begin position="1"/>
        <end position="509"/>
    </location>
</feature>
<feature type="transmembrane region" description="Helical" evidence="2">
    <location>
        <begin position="2"/>
        <end position="19"/>
    </location>
</feature>
<feature type="binding site" description="axial binding residue" evidence="1">
    <location>
        <position position="454"/>
    </location>
    <ligand>
        <name>heme</name>
        <dbReference type="ChEBI" id="CHEBI:30413"/>
    </ligand>
    <ligandPart>
        <name>Fe</name>
        <dbReference type="ChEBI" id="CHEBI:18248"/>
    </ligandPart>
</feature>
<organism>
    <name type="scientific">Dictyostelium discoideum</name>
    <name type="common">Social amoeba</name>
    <dbReference type="NCBI Taxonomy" id="44689"/>
    <lineage>
        <taxon>Eukaryota</taxon>
        <taxon>Amoebozoa</taxon>
        <taxon>Evosea</taxon>
        <taxon>Eumycetozoa</taxon>
        <taxon>Dictyostelia</taxon>
        <taxon>Dictyosteliales</taxon>
        <taxon>Dictyosteliaceae</taxon>
        <taxon>Dictyostelium</taxon>
    </lineage>
</organism>